<comment type="function">
    <text evidence="1">Endonuclease that specifically degrades the RNA of RNA-DNA hybrids.</text>
</comment>
<comment type="catalytic activity">
    <reaction>
        <text>Endonucleolytic cleavage to 5'-phosphomonoester.</text>
        <dbReference type="EC" id="3.1.26.4"/>
    </reaction>
</comment>
<comment type="cofactor">
    <cofactor evidence="1">
        <name>Mn(2+)</name>
        <dbReference type="ChEBI" id="CHEBI:29035"/>
    </cofactor>
    <cofactor evidence="1">
        <name>Mg(2+)</name>
        <dbReference type="ChEBI" id="CHEBI:18420"/>
    </cofactor>
    <text evidence="1">Manganese or magnesium. Binds 1 divalent metal ion per monomer in the absence of substrate. May bind a second metal ion after substrate binding.</text>
</comment>
<comment type="subcellular location">
    <subcellularLocation>
        <location evidence="3">Cytoplasm</location>
    </subcellularLocation>
</comment>
<comment type="similarity">
    <text evidence="3">Belongs to the RNase HII family.</text>
</comment>
<sequence>MIEFVYPHTHLVAGVDEVGRGPLVGAVVTAAVILDPARPIVGLNDSKKLSEKRRLSLYDEIKEKALSWSLGRAEAHEIDELNILHATMLAMQRAVAGLHIAPEYVLIDGNRCPELPVPSMAVVKGDSRVAEISAASILAKVTRDAEMAALDIVFPQYGFAQHKGYPTAFHLEKLAQYGATAHHRRSFAPVKRALGLVS</sequence>
<proteinExistence type="inferred from homology"/>
<accession>P0A2C1</accession>
<accession>P40675</accession>
<evidence type="ECO:0000250" key="1"/>
<evidence type="ECO:0000255" key="2">
    <source>
        <dbReference type="PROSITE-ProRule" id="PRU01319"/>
    </source>
</evidence>
<evidence type="ECO:0000305" key="3"/>
<organism>
    <name type="scientific">Salmonella typhimurium (strain LT2 / SGSC1412 / ATCC 700720)</name>
    <dbReference type="NCBI Taxonomy" id="99287"/>
    <lineage>
        <taxon>Bacteria</taxon>
        <taxon>Pseudomonadati</taxon>
        <taxon>Pseudomonadota</taxon>
        <taxon>Gammaproteobacteria</taxon>
        <taxon>Enterobacterales</taxon>
        <taxon>Enterobacteriaceae</taxon>
        <taxon>Salmonella</taxon>
    </lineage>
</organism>
<protein>
    <recommendedName>
        <fullName>Ribonuclease HII</fullName>
        <shortName>RNase HII</shortName>
        <ecNumber>3.1.26.4</ecNumber>
    </recommendedName>
</protein>
<reference key="1">
    <citation type="journal article" date="2001" name="Nature">
        <title>Complete genome sequence of Salmonella enterica serovar Typhimurium LT2.</title>
        <authorList>
            <person name="McClelland M."/>
            <person name="Sanderson K.E."/>
            <person name="Spieth J."/>
            <person name="Clifton S.W."/>
            <person name="Latreille P."/>
            <person name="Courtney L."/>
            <person name="Porwollik S."/>
            <person name="Ali J."/>
            <person name="Dante M."/>
            <person name="Du F."/>
            <person name="Hou S."/>
            <person name="Layman D."/>
            <person name="Leonard S."/>
            <person name="Nguyen C."/>
            <person name="Scott K."/>
            <person name="Holmes A."/>
            <person name="Grewal N."/>
            <person name="Mulvaney E."/>
            <person name="Ryan E."/>
            <person name="Sun H."/>
            <person name="Florea L."/>
            <person name="Miller W."/>
            <person name="Stoneking T."/>
            <person name="Nhan M."/>
            <person name="Waterston R."/>
            <person name="Wilson R.K."/>
        </authorList>
    </citation>
    <scope>NUCLEOTIDE SEQUENCE [LARGE SCALE GENOMIC DNA]</scope>
    <source>
        <strain>LT2 / SGSC1412 / ATCC 700720</strain>
    </source>
</reference>
<reference key="2">
    <citation type="journal article" date="1989" name="J. Bacteriol.">
        <title>Nucleotide sequences of dnaE, the gene for the polymerase subunit of DNA polymerase III in Salmonella typhimurium, and a variant that facilitates growth in the absence of another polymerase subunit.</title>
        <authorList>
            <person name="Lancy E.D."/>
            <person name="Lifsics M.R."/>
            <person name="Munson P."/>
            <person name="Maurer R."/>
        </authorList>
    </citation>
    <scope>NUCLEOTIDE SEQUENCE [GENOMIC DNA] OF 155-198</scope>
</reference>
<reference key="3">
    <citation type="journal article" date="1994" name="Nat. Genet.">
        <title>Large scale bacterial gene discovery by similarity search.</title>
        <authorList>
            <person name="Robison K."/>
            <person name="Gilbert W."/>
            <person name="Church G.M."/>
        </authorList>
    </citation>
    <scope>IDENTIFICATION</scope>
</reference>
<feature type="chain" id="PRO_0000111618" description="Ribonuclease HII">
    <location>
        <begin position="1"/>
        <end position="198"/>
    </location>
</feature>
<feature type="domain" description="RNase H type-2" evidence="2">
    <location>
        <begin position="10"/>
        <end position="198"/>
    </location>
</feature>
<feature type="binding site" evidence="1">
    <location>
        <position position="16"/>
    </location>
    <ligand>
        <name>a divalent metal cation</name>
        <dbReference type="ChEBI" id="CHEBI:60240"/>
    </ligand>
</feature>
<feature type="binding site" evidence="1">
    <location>
        <position position="17"/>
    </location>
    <ligand>
        <name>a divalent metal cation</name>
        <dbReference type="ChEBI" id="CHEBI:60240"/>
    </ligand>
</feature>
<feature type="binding site" evidence="1">
    <location>
        <position position="108"/>
    </location>
    <ligand>
        <name>a divalent metal cation</name>
        <dbReference type="ChEBI" id="CHEBI:60240"/>
    </ligand>
</feature>
<feature type="sequence conflict" description="In Ref. 2." evidence="3" ref="2">
    <original>H</original>
    <variation>D</variation>
    <location>
        <position position="182"/>
    </location>
</feature>
<keyword id="KW-0963">Cytoplasm</keyword>
<keyword id="KW-0255">Endonuclease</keyword>
<keyword id="KW-0378">Hydrolase</keyword>
<keyword id="KW-0464">Manganese</keyword>
<keyword id="KW-0479">Metal-binding</keyword>
<keyword id="KW-0540">Nuclease</keyword>
<keyword id="KW-1185">Reference proteome</keyword>
<name>RNH2_SALTY</name>
<dbReference type="EC" id="3.1.26.4"/>
<dbReference type="EMBL" id="AE006468">
    <property type="protein sequence ID" value="AAL19194.1"/>
    <property type="molecule type" value="Genomic_DNA"/>
</dbReference>
<dbReference type="EMBL" id="M26046">
    <property type="status" value="NOT_ANNOTATED_CDS"/>
    <property type="molecule type" value="Genomic_DNA"/>
</dbReference>
<dbReference type="RefSeq" id="NP_459235.1">
    <property type="nucleotide sequence ID" value="NC_003197.2"/>
</dbReference>
<dbReference type="RefSeq" id="WP_000569412.1">
    <property type="nucleotide sequence ID" value="NC_003197.2"/>
</dbReference>
<dbReference type="SMR" id="P0A2C1"/>
<dbReference type="STRING" id="99287.STM0230"/>
<dbReference type="PaxDb" id="99287-STM0230"/>
<dbReference type="GeneID" id="1251748"/>
<dbReference type="KEGG" id="stm:STM0230"/>
<dbReference type="PATRIC" id="fig|99287.12.peg.243"/>
<dbReference type="HOGENOM" id="CLU_036532_3_2_6"/>
<dbReference type="OMA" id="YPTKLHL"/>
<dbReference type="PhylomeDB" id="P0A2C1"/>
<dbReference type="BioCyc" id="SENT99287:STM0230-MONOMER"/>
<dbReference type="Proteomes" id="UP000001014">
    <property type="component" value="Chromosome"/>
</dbReference>
<dbReference type="GO" id="GO:0005737">
    <property type="term" value="C:cytoplasm"/>
    <property type="evidence" value="ECO:0007669"/>
    <property type="project" value="UniProtKB-SubCell"/>
</dbReference>
<dbReference type="GO" id="GO:0032299">
    <property type="term" value="C:ribonuclease H2 complex"/>
    <property type="evidence" value="ECO:0000318"/>
    <property type="project" value="GO_Central"/>
</dbReference>
<dbReference type="GO" id="GO:0030145">
    <property type="term" value="F:manganese ion binding"/>
    <property type="evidence" value="ECO:0007669"/>
    <property type="project" value="UniProtKB-UniRule"/>
</dbReference>
<dbReference type="GO" id="GO:0003723">
    <property type="term" value="F:RNA binding"/>
    <property type="evidence" value="ECO:0007669"/>
    <property type="project" value="InterPro"/>
</dbReference>
<dbReference type="GO" id="GO:0004523">
    <property type="term" value="F:RNA-DNA hybrid ribonuclease activity"/>
    <property type="evidence" value="ECO:0000318"/>
    <property type="project" value="GO_Central"/>
</dbReference>
<dbReference type="GO" id="GO:0043137">
    <property type="term" value="P:DNA replication, removal of RNA primer"/>
    <property type="evidence" value="ECO:0000318"/>
    <property type="project" value="GO_Central"/>
</dbReference>
<dbReference type="GO" id="GO:0006298">
    <property type="term" value="P:mismatch repair"/>
    <property type="evidence" value="ECO:0000318"/>
    <property type="project" value="GO_Central"/>
</dbReference>
<dbReference type="CDD" id="cd07182">
    <property type="entry name" value="RNase_HII_bacteria_HII_like"/>
    <property type="match status" value="1"/>
</dbReference>
<dbReference type="FunFam" id="3.30.420.10:FF:000006">
    <property type="entry name" value="Ribonuclease HII"/>
    <property type="match status" value="1"/>
</dbReference>
<dbReference type="Gene3D" id="3.30.420.10">
    <property type="entry name" value="Ribonuclease H-like superfamily/Ribonuclease H"/>
    <property type="match status" value="1"/>
</dbReference>
<dbReference type="HAMAP" id="MF_00052_B">
    <property type="entry name" value="RNase_HII_B"/>
    <property type="match status" value="1"/>
</dbReference>
<dbReference type="InterPro" id="IPR022898">
    <property type="entry name" value="RNase_HII"/>
</dbReference>
<dbReference type="InterPro" id="IPR001352">
    <property type="entry name" value="RNase_HII/HIII"/>
</dbReference>
<dbReference type="InterPro" id="IPR024567">
    <property type="entry name" value="RNase_HII/HIII_dom"/>
</dbReference>
<dbReference type="InterPro" id="IPR012337">
    <property type="entry name" value="RNaseH-like_sf"/>
</dbReference>
<dbReference type="InterPro" id="IPR036397">
    <property type="entry name" value="RNaseH_sf"/>
</dbReference>
<dbReference type="NCBIfam" id="NF000594">
    <property type="entry name" value="PRK00015.1-1"/>
    <property type="match status" value="1"/>
</dbReference>
<dbReference type="NCBIfam" id="NF000595">
    <property type="entry name" value="PRK00015.1-3"/>
    <property type="match status" value="1"/>
</dbReference>
<dbReference type="NCBIfam" id="NF000596">
    <property type="entry name" value="PRK00015.1-4"/>
    <property type="match status" value="1"/>
</dbReference>
<dbReference type="PANTHER" id="PTHR10954">
    <property type="entry name" value="RIBONUCLEASE H2 SUBUNIT A"/>
    <property type="match status" value="1"/>
</dbReference>
<dbReference type="PANTHER" id="PTHR10954:SF18">
    <property type="entry name" value="RIBONUCLEASE HII"/>
    <property type="match status" value="1"/>
</dbReference>
<dbReference type="Pfam" id="PF01351">
    <property type="entry name" value="RNase_HII"/>
    <property type="match status" value="1"/>
</dbReference>
<dbReference type="SUPFAM" id="SSF53098">
    <property type="entry name" value="Ribonuclease H-like"/>
    <property type="match status" value="1"/>
</dbReference>
<dbReference type="PROSITE" id="PS51975">
    <property type="entry name" value="RNASE_H_2"/>
    <property type="match status" value="1"/>
</dbReference>
<gene>
    <name type="primary">rnhB</name>
    <name type="ordered locus">STM0230</name>
</gene>